<accession>Q9LTF5</accession>
<gene>
    <name type="ordered locus">At5g52620</name>
    <name type="ORF">F6N7.11</name>
</gene>
<name>FB292_ARATH</name>
<keyword id="KW-1185">Reference proteome</keyword>
<sequence>MEREGKSDPIPIDIILDILSRLSTNSIAKFGLASKFCGSILRGQDFIELFLITRPLSRPRLLFAVQNSDKWCLYSSPQSQFPDENHSLVVSADFHMELRRDMGQEIFGLVSGLLYFPNTRTGEVPVICNPSTGQYARLTQRSSMNNLSSLLGYDPIGKKYKVITPSSSHFDPENILTLGTGKVAWRSIRCLVDHYPESEGICINGVLYYMASNKFQFSGVKIASFNVRYETLKFLNADVDVTFCPALAKLINYKGKLCVLSCLWDNQIYPKPLRWKVLMLWLWVLEDAEKEEWLKREYTLPVNIVHGNVSVVGVTATGEIILSMDYTSESFFVYYFNPERNTLEKVEIQGFEGSEKNLSSRVYTFVDYAEDVKFI</sequence>
<feature type="chain" id="PRO_0000283558" description="Putative F-box protein At5g52620">
    <location>
        <begin position="1"/>
        <end position="375"/>
    </location>
</feature>
<feature type="domain" description="F-box">
    <location>
        <begin position="5"/>
        <end position="52"/>
    </location>
</feature>
<dbReference type="EMBL" id="AB025606">
    <property type="protein sequence ID" value="BAA98080.1"/>
    <property type="molecule type" value="Genomic_DNA"/>
</dbReference>
<dbReference type="EMBL" id="CP002688">
    <property type="protein sequence ID" value="AED96242.1"/>
    <property type="molecule type" value="Genomic_DNA"/>
</dbReference>
<dbReference type="RefSeq" id="NP_200074.1">
    <property type="nucleotide sequence ID" value="NM_124640.1"/>
</dbReference>
<dbReference type="SMR" id="Q9LTF5"/>
<dbReference type="iPTMnet" id="Q9LTF5"/>
<dbReference type="PaxDb" id="3702-AT5G52620.1"/>
<dbReference type="ProteomicsDB" id="222462"/>
<dbReference type="DNASU" id="835339"/>
<dbReference type="EnsemblPlants" id="AT5G52620.1">
    <property type="protein sequence ID" value="AT5G52620.1"/>
    <property type="gene ID" value="AT5G52620"/>
</dbReference>
<dbReference type="GeneID" id="835339"/>
<dbReference type="Gramene" id="AT5G52620.1">
    <property type="protein sequence ID" value="AT5G52620.1"/>
    <property type="gene ID" value="AT5G52620"/>
</dbReference>
<dbReference type="KEGG" id="ath:AT5G52620"/>
<dbReference type="Araport" id="AT5G52620"/>
<dbReference type="TAIR" id="AT5G52620"/>
<dbReference type="eggNOG" id="ENOG502SNHU">
    <property type="taxonomic scope" value="Eukaryota"/>
</dbReference>
<dbReference type="HOGENOM" id="CLU_027176_8_1_1"/>
<dbReference type="InParanoid" id="Q9LTF5"/>
<dbReference type="OMA" id="HYPISEG"/>
<dbReference type="PhylomeDB" id="Q9LTF5"/>
<dbReference type="PRO" id="PR:Q9LTF5"/>
<dbReference type="Proteomes" id="UP000006548">
    <property type="component" value="Chromosome 5"/>
</dbReference>
<dbReference type="ExpressionAtlas" id="Q9LTF5">
    <property type="expression patterns" value="baseline and differential"/>
</dbReference>
<dbReference type="InterPro" id="IPR013187">
    <property type="entry name" value="F-box-assoc_dom_typ3"/>
</dbReference>
<dbReference type="InterPro" id="IPR017451">
    <property type="entry name" value="F-box-assoc_interact_dom"/>
</dbReference>
<dbReference type="InterPro" id="IPR036047">
    <property type="entry name" value="F-box-like_dom_sf"/>
</dbReference>
<dbReference type="NCBIfam" id="TIGR01640">
    <property type="entry name" value="F_box_assoc_1"/>
    <property type="match status" value="1"/>
</dbReference>
<dbReference type="PANTHER" id="PTHR31111">
    <property type="entry name" value="BNAA05G37150D PROTEIN-RELATED"/>
    <property type="match status" value="1"/>
</dbReference>
<dbReference type="PANTHER" id="PTHR31111:SF130">
    <property type="entry name" value="F-BOX ASSOCIATED UBIQUITINATION EFFECTOR FAMILY PROTEIN"/>
    <property type="match status" value="1"/>
</dbReference>
<dbReference type="Pfam" id="PF08268">
    <property type="entry name" value="FBA_3"/>
    <property type="match status" value="1"/>
</dbReference>
<dbReference type="SUPFAM" id="SSF81383">
    <property type="entry name" value="F-box domain"/>
    <property type="match status" value="1"/>
</dbReference>
<organism>
    <name type="scientific">Arabidopsis thaliana</name>
    <name type="common">Mouse-ear cress</name>
    <dbReference type="NCBI Taxonomy" id="3702"/>
    <lineage>
        <taxon>Eukaryota</taxon>
        <taxon>Viridiplantae</taxon>
        <taxon>Streptophyta</taxon>
        <taxon>Embryophyta</taxon>
        <taxon>Tracheophyta</taxon>
        <taxon>Spermatophyta</taxon>
        <taxon>Magnoliopsida</taxon>
        <taxon>eudicotyledons</taxon>
        <taxon>Gunneridae</taxon>
        <taxon>Pentapetalae</taxon>
        <taxon>rosids</taxon>
        <taxon>malvids</taxon>
        <taxon>Brassicales</taxon>
        <taxon>Brassicaceae</taxon>
        <taxon>Camelineae</taxon>
        <taxon>Arabidopsis</taxon>
    </lineage>
</organism>
<protein>
    <recommendedName>
        <fullName>Putative F-box protein At5g52620</fullName>
    </recommendedName>
</protein>
<reference key="1">
    <citation type="submission" date="1999-04" db="EMBL/GenBank/DDBJ databases">
        <title>Structural analysis of Arabidopsis thaliana chromosome 5. XI.</title>
        <authorList>
            <person name="Kaneko T."/>
            <person name="Katoh T."/>
            <person name="Asamizu E."/>
            <person name="Sato S."/>
            <person name="Nakamura Y."/>
            <person name="Kotani H."/>
            <person name="Tabata S."/>
        </authorList>
    </citation>
    <scope>NUCLEOTIDE SEQUENCE [LARGE SCALE GENOMIC DNA]</scope>
    <source>
        <strain>cv. Columbia</strain>
    </source>
</reference>
<reference key="2">
    <citation type="journal article" date="2017" name="Plant J.">
        <title>Araport11: a complete reannotation of the Arabidopsis thaliana reference genome.</title>
        <authorList>
            <person name="Cheng C.Y."/>
            <person name="Krishnakumar V."/>
            <person name="Chan A.P."/>
            <person name="Thibaud-Nissen F."/>
            <person name="Schobel S."/>
            <person name="Town C.D."/>
        </authorList>
    </citation>
    <scope>GENOME REANNOTATION</scope>
    <source>
        <strain>cv. Columbia</strain>
    </source>
</reference>
<proteinExistence type="predicted"/>